<comment type="function">
    <text>Probably participates in a plant defense mechanism.</text>
</comment>
<comment type="tissue specificity">
    <text evidence="3">Expressed in petals, petioles, roots and runners but not in leaves (at protein level).</text>
</comment>
<comment type="domain">
    <text>The presence of a 'disulfide through disulfide knot' structurally defines this protein as a knottin.</text>
</comment>
<comment type="PTM">
    <text>This is a cyclic peptide.</text>
</comment>
<comment type="mass spectrometry"/>
<comment type="similarity">
    <text evidence="1">Belongs to the cyclotide family. Bracelet subfamily.</text>
</comment>
<comment type="caution">
    <text evidence="4">This peptide is cyclic. The start position was chosen by similarity to OAK1 (kalata-B1) for which the DNA sequence is known.</text>
</comment>
<dbReference type="SMR" id="P58436"/>
<dbReference type="GO" id="GO:0006952">
    <property type="term" value="P:defense response"/>
    <property type="evidence" value="ECO:0000250"/>
    <property type="project" value="UniProtKB"/>
</dbReference>
<dbReference type="InterPro" id="IPR005535">
    <property type="entry name" value="Cyclotide"/>
</dbReference>
<dbReference type="InterPro" id="IPR012323">
    <property type="entry name" value="Cyclotide_bracelet_CS"/>
</dbReference>
<dbReference type="InterPro" id="IPR036146">
    <property type="entry name" value="Cyclotide_sf"/>
</dbReference>
<dbReference type="Pfam" id="PF03784">
    <property type="entry name" value="Cyclotide"/>
    <property type="match status" value="1"/>
</dbReference>
<dbReference type="PIRSF" id="PIRSF037891">
    <property type="entry name" value="Cycloviolacin"/>
    <property type="match status" value="1"/>
</dbReference>
<dbReference type="SUPFAM" id="SSF57038">
    <property type="entry name" value="Cyclotides"/>
    <property type="match status" value="1"/>
</dbReference>
<dbReference type="PROSITE" id="PS51052">
    <property type="entry name" value="CYCLOTIDE"/>
    <property type="match status" value="1"/>
</dbReference>
<dbReference type="PROSITE" id="PS60008">
    <property type="entry name" value="CYCLOTIDE_BRACELET"/>
    <property type="match status" value="1"/>
</dbReference>
<feature type="peptide" id="PRO_0000043612" description="Cycloviolacin-O4">
    <location>
        <begin position="1"/>
        <end position="30"/>
    </location>
</feature>
<feature type="disulfide bond">
    <location>
        <begin position="4"/>
        <end position="20"/>
    </location>
</feature>
<feature type="disulfide bond">
    <location>
        <begin position="8"/>
        <end position="22"/>
    </location>
</feature>
<feature type="disulfide bond">
    <location>
        <begin position="13"/>
        <end position="27"/>
    </location>
</feature>
<feature type="cross-link" description="Cyclopeptide (Gly-Asn)">
    <location>
        <begin position="1"/>
        <end position="30"/>
    </location>
</feature>
<reference key="1">
    <citation type="journal article" date="1999" name="J. Mol. Biol.">
        <title>Plant cyclotides: a unique family of cyclic and knotted proteins that defines the cyclic cystine knot structural motif.</title>
        <authorList>
            <person name="Craik D.J."/>
            <person name="Daly N.L."/>
            <person name="Bond T."/>
            <person name="Waine C."/>
        </authorList>
    </citation>
    <scope>PROTEIN SEQUENCE</scope>
</reference>
<reference key="2">
    <citation type="journal article" date="2006" name="Biochem. J.">
        <title>A novel suite of cyclotides from Viola odorata: sequence variation and the implications for structure, function and stability.</title>
        <authorList>
            <person name="Ireland D.C."/>
            <person name="Colgrave M.L."/>
            <person name="Craik D.J."/>
        </authorList>
    </citation>
    <scope>PROTEIN SEQUENCE</scope>
    <scope>MASS SPECTROMETRY</scope>
</reference>
<reference key="3">
    <citation type="journal article" date="2017" name="J. Nat. Prod.">
        <title>Cyclotides from the Indian Medicinal Plant Viola odorata (Banafsha): Identification and Characterization.</title>
        <authorList>
            <person name="Narayani M."/>
            <person name="Chadha A."/>
            <person name="Srivastava S."/>
        </authorList>
    </citation>
    <scope>TISSUE SPECIFICITY</scope>
    <scope>IDENTIFICATION BY MASS SPECTROMETRY</scope>
</reference>
<accession>P58436</accession>
<name>CYO4_VIOOD</name>
<proteinExistence type="evidence at protein level"/>
<keyword id="KW-0903">Direct protein sequencing</keyword>
<keyword id="KW-1015">Disulfide bond</keyword>
<keyword id="KW-0960">Knottin</keyword>
<keyword id="KW-0611">Plant defense</keyword>
<protein>
    <recommendedName>
        <fullName>Cycloviolacin-O4</fullName>
    </recommendedName>
</protein>
<sequence>GIPCGESCVWIPCISSAIGCSCKNKVCYRN</sequence>
<evidence type="ECO:0000255" key="1">
    <source>
        <dbReference type="PROSITE-ProRule" id="PRU00395"/>
    </source>
</evidence>
<evidence type="ECO:0000269" key="2">
    <source>
    </source>
</evidence>
<evidence type="ECO:0000269" key="3">
    <source>
    </source>
</evidence>
<evidence type="ECO:0000305" key="4"/>
<organism>
    <name type="scientific">Viola odorata</name>
    <name type="common">Sweet violet</name>
    <dbReference type="NCBI Taxonomy" id="97441"/>
    <lineage>
        <taxon>Eukaryota</taxon>
        <taxon>Viridiplantae</taxon>
        <taxon>Streptophyta</taxon>
        <taxon>Embryophyta</taxon>
        <taxon>Tracheophyta</taxon>
        <taxon>Spermatophyta</taxon>
        <taxon>Magnoliopsida</taxon>
        <taxon>eudicotyledons</taxon>
        <taxon>Gunneridae</taxon>
        <taxon>Pentapetalae</taxon>
        <taxon>rosids</taxon>
        <taxon>fabids</taxon>
        <taxon>Malpighiales</taxon>
        <taxon>Violaceae</taxon>
        <taxon>Viola</taxon>
        <taxon>Viola subgen. Viola</taxon>
        <taxon>Viola sect. Viola</taxon>
        <taxon>Viola subsect. Viola</taxon>
    </lineage>
</organism>